<sequence length="2963" mass="308750">MIPIYLRQKLISYALIYLVAIQPIMPVMAAGIDVAQGSTALDKAGNGVPVVNIAPPNSAGVSHNVYNQFNVGSEGVILNNATDRLTQTQLGGLIQSNANLNGKAAGAIINEVVSANRSQLNGYLEVGGKAAAVMVANPYGITCDGCGFINTPNVTLTTGKPMMDTNGKLQSLDVTQGAISIQGKGLDASQSSALSLISRANEINAQIHAQDLTVIAGSNRVDSAGHVSERQGQGDVPQVSIDTGALGGMYANRIRLVSSEKGVGVNLGNLNARQGDIQLDSKGKLTVNNAVAHGDIIASADQLHLQGHQRAQGNITLNSHGESRLDNATLLAGDTLAVKAGGKITSKESQLNAGVDSAGNIGEKGTVSLQGSELALQQSHVAAAAVSVVSSGDIVQDKESSLTARQLKLSGQHLELAGQLAANNDLSITGQSLRGSKTASVGSQKNITFNLAGDSEWAGQMVAGNDLIFSGQSLTNHGQLLAANQMHFEGLGLDNQGQILAADINIAVHRLNNQGQLQGDKSLLLTADSLVQSTRGTMNSGRALTLRAAEMDISGDLQSQILDVKGDNWHNHGNVVAQEHAQLRLGHTIDNRGVLVSAGDMDLSFNQLSNQGRILGAELALSGKNISNSGQLVGKQQLSLQLDEGYQGTSSGELKSDGLLSVTADEINNQGHWESGSLNTTAQQLTNNGKVLSVGSQNINLSGSLTNQQLGQFLTDGEFIIVAEQVINSGLLQGNQAVTLNGLKQYQGGTGSQLLTKGVGEIHSDSVNNAGLIQAGSLSLTGEVLDNTGTLSGLSTLHIDSHNEIINQARGQLLSDNTIKLDSEQLVNNGLMQGTELVLASQHLTNNGTLLGLTYLELQAVNLTNSSAGKILSGQDLHFTTSHLQQNGQWTALRDLTGEIKGALDFSGAMAAGKQLSLQVDGDFNQRGNLQGNDVSITSRGVITNSGQLAAGSGSLALNGAAINQEQSGSLQSGGQISLTSRGDINNRGFVGAAGDLLLQAIGAVNNTSLLYAGGSMRLLADAIYNVRGDILAGNHLWMQRDNAGNSNREIINSSGNIETQQGDMVLNTASLLNRRDGFSVTEKTGAVNSGGIANVGATNILISSGYFKPGEVTHYSKTVTGGGHHGNVSTVNLLGLVPSARKQKLSTSSSIVTVDSPYDVGRIVAGRDINISANTLVNQASQMSAGRNALLQGQSLNNQSYQSGTLTQYLVYTNTRDTNPEYNLFEFKLSGSPTYEISNDGQLYQGVIQAVGSVSANFTQNLSNTSVKPNIGSIVHQVTQPSLTATTVPSELATKPNSGAAQVAPDSNNGDLVALYNQSGTALTFGLGTDGKPLTRAQLSDYPLPDSNNGLFVVNSEPGSRYLISTNPTLEKLGNVDSTLLSGLQAMLGRQPQTSVAIERNPQWTQQDNFLGSDYLLKKINLDAEHDYRFLGDAAFDTRYINNAVLSQTGQRYLNGVGSDLSQMQYLLDNAAQSQKKLDLKLGVSLTPEQVAQLSHSIVWWENINVNGQTVLAPKLYLAKAEQAHLQGSVISGNKVELNAGSVTNSGVLKGVELLAIASQDTITNEKGGLLTSEGALNLTALNNISNLSSSISGDRVAITSQNGDIINQTQTRQWSADQSRQPGYWSGIKTQSMTQTEVGETAAITAGKALTLAAGNNIAITGAKVTAAGDIGIQAAHDINIIANDLYSAQQQTLGRNRNIELNEQHESQSSHVSAGGTLTAHAGRDITLSASHLGADGNATLQAERDVNLLVQEKSTRNQHIDSEDKTTGYTRSTLSSGGDLTASAGRDINSQAAAVTAENTLALNAGRDINLNAQESRQYNESHGKNYKRVDEAIRQQGTELASGKGTQVHAGQDINLHAASISAKGDLALQAGRDIAVNSATESDYHFFEEKKTKKKLVSKTTIHNVEEDFATTEKSSALVGNNVSLSAGNNLIVKGSSVVGDGTVVLKADNNVDIVAATEQQSSYRLNEKKTSGMFSGGGLGVTLGSKSSRQQINQEGSKQSESASAVGSTAGNVSILAGAQAHISGSDVIAGKDLNVIAGTIKVDPGNDVLKRRQIYEQKQSGLTLSLSSPFTDALLAINSKLKQASDAGSDKLSALYGAQAAREAWVGVDGTMDMMASKPGGPAADPGASIKLQLSVGASHSKSTSELAQNQTRGSSLTAGDNLTMVASGDHEQSGDLSVVGSGVTGNKVTLVAKNDVLLAAASNNSEQTSRDSSSGWNAGVHLSLGKETGIGIAANGFMSKGNSDGKTTDYANARINAKEALAINSGRDTVLSGAQVLGDKITAEIGRDLTISSLQDSDNYNSIQKDASAGFSFTFGPSGGGSASFSLGKTKIESKYASVGDQSGFFAGSKGFDLNVGNHTQLNGGVLASTAGAQDNLLSTGTLGWGDIHNQAEYKATSTRIGYSTDAPMPTLGMANAHGSASGTTRSAVASGEIEIRNQGEQQQDVTTLSRDTDSANGRIDKIFDESKVKDQMAFTQGVTQLATQLVGDVSSWNMKQAERSAAEKLEKDPKYQNATREKRQEMIYASADYKAAQESFGIGSSFWTAGMAVSAALTGLAGNADIGSISSAAVAPYLAGQIKKYTTDKDDKVNKTINILAHAILGGIVAQMQGNSATAGALGGGGGELAARIYMDQVHPGKKVSDLSEADKKIVSAIGTLTAGILGGLSTDSSTGLITGAQAGKNAVEDNNLSFGKGMADIGMSQTSLGVSMLRNGTSPDEVSAALVKNSLGQTPEGQDPIRGLLTAWAEFFGVPVTALIANGPMTVERAAEIVSSGVPTSEAKLIQYTAAKAFLAVAKNLPQGTTLVSTPEGISFRIDQPKHLSSVDGFTQKAGISGGHNADAFYEAAKQYDVKILSETSTGAKGITEVKYQIPTKDRAGNLTGGYKPAVETKTIYDPNVFTDQKILELGQQAAAKGYKDAMASKSGQASATVDGVSFRIYVDKDTGRVRNFHPN</sequence>
<keyword id="KW-0255">Endonuclease</keyword>
<keyword id="KW-0378">Hydrolase</keyword>
<keyword id="KW-0540">Nuclease</keyword>
<keyword id="KW-0964">Secreted</keyword>
<keyword id="KW-0732">Signal</keyword>
<keyword id="KW-1266">Target cell cytoplasm</keyword>
<keyword id="KW-0800">Toxin</keyword>
<keyword id="KW-0843">Virulence</keyword>
<evidence type="ECO:0000250" key="1">
    <source>
        <dbReference type="UniProtKB" id="A0A1S4NYE3"/>
    </source>
</evidence>
<evidence type="ECO:0000250" key="2">
    <source>
        <dbReference type="UniProtKB" id="Q3YL96"/>
    </source>
</evidence>
<evidence type="ECO:0000255" key="3"/>
<evidence type="ECO:0000256" key="4">
    <source>
        <dbReference type="SAM" id="MobiDB-lite"/>
    </source>
</evidence>
<evidence type="ECO:0000269" key="5">
    <source>
    </source>
</evidence>
<evidence type="ECO:0000303" key="6">
    <source>
    </source>
</evidence>
<evidence type="ECO:0000305" key="7"/>
<evidence type="ECO:0000305" key="8">
    <source>
    </source>
</evidence>
<gene>
    <name evidence="6" type="primary">cdiA</name>
    <name type="ORF">ymoll0001_27200</name>
</gene>
<protein>
    <recommendedName>
        <fullName evidence="6">tRNA nuclease CdiA</fullName>
        <shortName evidence="6">tRNase CdiA</shortName>
        <ecNumber evidence="5">3.1.-.-</ecNumber>
    </recommendedName>
    <alternativeName>
        <fullName evidence="6">Contact-dependent inhibitor A</fullName>
        <shortName evidence="6">CdiA-43969</shortName>
    </alternativeName>
    <alternativeName>
        <fullName>Toxin CdiA</fullName>
    </alternativeName>
</protein>
<dbReference type="EC" id="3.1.-.-" evidence="5"/>
<dbReference type="EMBL" id="AALD02000043">
    <property type="protein sequence ID" value="EEQ09309.1"/>
    <property type="molecule type" value="Genomic_DNA"/>
</dbReference>
<dbReference type="RefSeq" id="WP_004876812.1">
    <property type="nucleotide sequence ID" value="NZ_AALD02000043.1"/>
</dbReference>
<dbReference type="SMR" id="C4SGN7"/>
<dbReference type="GeneID" id="57919904"/>
<dbReference type="GO" id="GO:0005576">
    <property type="term" value="C:extracellular region"/>
    <property type="evidence" value="ECO:0007669"/>
    <property type="project" value="UniProtKB-SubCell"/>
</dbReference>
<dbReference type="GO" id="GO:0004519">
    <property type="term" value="F:endonuclease activity"/>
    <property type="evidence" value="ECO:0007669"/>
    <property type="project" value="UniProtKB-KW"/>
</dbReference>
<dbReference type="GO" id="GO:0090729">
    <property type="term" value="F:toxin activity"/>
    <property type="evidence" value="ECO:0007669"/>
    <property type="project" value="UniProtKB-KW"/>
</dbReference>
<dbReference type="CDD" id="cd20686">
    <property type="entry name" value="CdiA-CT_Ec-like"/>
    <property type="match status" value="1"/>
</dbReference>
<dbReference type="Gene3D" id="2.160.20.10">
    <property type="entry name" value="Single-stranded right-handed beta-helix, Pectin lyase-like"/>
    <property type="match status" value="1"/>
</dbReference>
<dbReference type="InterPro" id="IPR010069">
    <property type="entry name" value="CdiA_FHA1_rpt"/>
</dbReference>
<dbReference type="InterPro" id="IPR008638">
    <property type="entry name" value="FhaB/CdiA-like_TPS"/>
</dbReference>
<dbReference type="InterPro" id="IPR025157">
    <property type="entry name" value="Hemagglutinin_rpt"/>
</dbReference>
<dbReference type="InterPro" id="IPR012334">
    <property type="entry name" value="Pectin_lyas_fold"/>
</dbReference>
<dbReference type="InterPro" id="IPR011050">
    <property type="entry name" value="Pectin_lyase_fold/virulence"/>
</dbReference>
<dbReference type="InterPro" id="IPR006914">
    <property type="entry name" value="VENN_dom"/>
</dbReference>
<dbReference type="NCBIfam" id="TIGR01901">
    <property type="entry name" value="adhes_NPXG"/>
    <property type="match status" value="1"/>
</dbReference>
<dbReference type="NCBIfam" id="TIGR01731">
    <property type="entry name" value="fil_hemag_20aa"/>
    <property type="match status" value="7"/>
</dbReference>
<dbReference type="Pfam" id="PF13332">
    <property type="entry name" value="Fil_haemagg_2"/>
    <property type="match status" value="5"/>
</dbReference>
<dbReference type="Pfam" id="PF04829">
    <property type="entry name" value="PT-VENN"/>
    <property type="match status" value="1"/>
</dbReference>
<dbReference type="Pfam" id="PF05860">
    <property type="entry name" value="TPS"/>
    <property type="match status" value="1"/>
</dbReference>
<dbReference type="SMART" id="SM00912">
    <property type="entry name" value="Haemagg_act"/>
    <property type="match status" value="1"/>
</dbReference>
<dbReference type="SUPFAM" id="SSF51126">
    <property type="entry name" value="Pectin lyase-like"/>
    <property type="match status" value="1"/>
</dbReference>
<reference key="1">
    <citation type="submission" date="2008-12" db="EMBL/GenBank/DDBJ databases">
        <title>Annotation of the Yersinia mollaretii ATCC 43969 genome.</title>
        <authorList>
            <person name="Read T.D."/>
            <person name="Akmal A."/>
            <person name="Bishop-Lilly K."/>
            <person name="Chen P.E."/>
            <person name="Cook C."/>
            <person name="Kiley M.P."/>
            <person name="Lentz S."/>
            <person name="Mateczun A."/>
            <person name="Nagarajan N."/>
            <person name="Nolan N."/>
            <person name="Osborne B.I."/>
            <person name="Pop M."/>
            <person name="Sozhamannan S."/>
            <person name="Stewart A.C."/>
            <person name="Sulakvelidze A."/>
            <person name="Thomason B."/>
            <person name="Willner K."/>
            <person name="Zwick M.E."/>
        </authorList>
    </citation>
    <scope>NUCLEOTIDE SEQUENCE [LARGE SCALE GENOMIC DNA]</scope>
    <source>
        <strain>ATCC 43969 / DSM 18520 / CIP 103324 / CNY 7263 / WAIP 204</strain>
    </source>
</reference>
<reference key="2">
    <citation type="journal article" date="2018" name="Mol. Microbiol.">
        <title>Functional plasticity of antibacterial EndoU toxins.</title>
        <authorList>
            <person name="Michalska K."/>
            <person name="Quan Nhan D."/>
            <person name="Willett J.L.E."/>
            <person name="Stols L.M."/>
            <person name="Eschenfeldt W.H."/>
            <person name="Jones A.M."/>
            <person name="Nguyen J.Y."/>
            <person name="Koskiniemi S."/>
            <person name="Low D.A."/>
            <person name="Goulding C.W."/>
            <person name="Joachimiak A."/>
            <person name="Hayes C.S."/>
        </authorList>
    </citation>
    <scope>FUNCTION</scope>
    <source>
        <strain>ATCC 43969 / DSM 18520 / CIP 103324 / CNY 7263 / WAIP 204</strain>
    </source>
</reference>
<feature type="signal peptide" evidence="3">
    <location>
        <begin position="1"/>
        <end position="29"/>
    </location>
</feature>
<feature type="chain" id="PRO_0000446870" description="tRNA nuclease CdiA" evidence="3">
    <location>
        <begin position="30"/>
        <end position="2963"/>
    </location>
</feature>
<feature type="region of interest" description="Two-partner system transport domain (TPS)" evidence="2">
    <location>
        <begin position="35"/>
        <end position="320"/>
    </location>
</feature>
<feature type="region of interest" description="FHA-1" evidence="7">
    <location>
        <begin position="573"/>
        <end position="1074"/>
    </location>
</feature>
<feature type="region of interest" description="Receptor binding domain (RBD)" evidence="1">
    <location>
        <begin position="1075"/>
        <end position="1342"/>
    </location>
</feature>
<feature type="region of interest" description="YP domain" evidence="2">
    <location>
        <begin position="1343"/>
        <end position="1528"/>
    </location>
</feature>
<feature type="region of interest" description="Periplasmic FHA-1 repeat (pFR)" evidence="7">
    <location>
        <begin position="1529"/>
        <end position="1751"/>
    </location>
</feature>
<feature type="region of interest" description="Disordered" evidence="4">
    <location>
        <begin position="1759"/>
        <end position="1787"/>
    </location>
</feature>
<feature type="region of interest" description="FHA-2" evidence="7">
    <location>
        <begin position="1762"/>
        <end position="2314"/>
    </location>
</feature>
<feature type="region of interest" description="Disordered" evidence="4">
    <location>
        <begin position="1992"/>
        <end position="2012"/>
    </location>
</feature>
<feature type="region of interest" description="C-terminal effector domain (CT)" evidence="5">
    <location>
        <begin position="2694"/>
        <end position="2963"/>
    </location>
</feature>
<feature type="short sequence motif" description="VEDN CT cleavage motif" evidence="7">
    <location>
        <begin position="2694"/>
        <end position="2697"/>
    </location>
</feature>
<feature type="compositionally biased region" description="Basic and acidic residues" evidence="4">
    <location>
        <begin position="1759"/>
        <end position="1770"/>
    </location>
</feature>
<feature type="compositionally biased region" description="Polar residues" evidence="4">
    <location>
        <begin position="1771"/>
        <end position="1782"/>
    </location>
</feature>
<comment type="function">
    <text evidence="5">Toxic component of a toxin-immunity protein module, which functions as a cellular contact-dependent growth inhibition (CDI) system. CDI modules allow bacteria to communicate with and inhibit the growth of closely related neighboring bacteria in a contact-dependent fashion. Targeting of the CT domain (residues 2824-2963) in the absence of immunity protein inhibits cell growth and causes tRNA(UUC-Glu) cleavage in the anticodon loop; expression of cognate immunity protein CdiI-43969 neutralizes growth inhibition and tRNA(UUC-Glu) remains intact, whereas non-cognate immunity proteins do not confer protection from the toxic effects.</text>
</comment>
<comment type="function">
    <text evidence="7">The CdiA protein is thought to be exported from the cell through the central lumen of CdiB, the other half of its two-partner system (TPS). The TPS domain probably remains associated with CdiB while the FHA-1 domain forms an extended filament with the receptor-binding domain (RBD) at its extremity; in the secretion arrested state the C-terminus of the RBD and YP domains form a hairpin-like structure as the FHA-2, PT and CT domains are periplasmic. The YP domain is probably responsible for this arrest at the point where it re-enters the host cell periplasm. Upon binding to a target cell outer membrane receptor a signal is transmitted to activate secretion. The filament elongates slightly, the rest of CdiA is secreted and the FHA-2 domain becomes stably associated with the target cell's outer membrane where it facilitates entry of the toxic CT domain into the target cell periplasm. From there the toxic CT domain is cleaved and gains access to the target cell cytoplasm via an inner membrane protein.</text>
</comment>
<comment type="subunit">
    <text evidence="8">Forms a 1:1 complex with cognate immunity protein CdiI.</text>
</comment>
<comment type="subcellular location">
    <subcellularLocation>
        <location evidence="3">Secreted</location>
    </subcellularLocation>
    <subcellularLocation>
        <location evidence="8">Target cell</location>
        <location evidence="8">Target cell cytoplasm</location>
    </subcellularLocation>
    <text evidence="7">Secreted to the cell surface by CdiB, its two partner secretion pathway (TPS) partner.</text>
</comment>
<comment type="similarity">
    <text evidence="7">In the N-terminal section; belongs to the CdiA toxin family.</text>
</comment>
<comment type="similarity">
    <text evidence="7">In the C-terminal section; belongs to the bacterial EndoU family.</text>
</comment>
<accession>C4SGN7</accession>
<organism>
    <name type="scientific">Yersinia mollaretii (strain ATCC 43969 / DSM 18520 / CIP 103324 / CNY 7263 / WAIP 204)</name>
    <dbReference type="NCBI Taxonomy" id="349967"/>
    <lineage>
        <taxon>Bacteria</taxon>
        <taxon>Pseudomonadati</taxon>
        <taxon>Pseudomonadota</taxon>
        <taxon>Gammaproteobacteria</taxon>
        <taxon>Enterobacterales</taxon>
        <taxon>Yersiniaceae</taxon>
        <taxon>Yersinia</taxon>
    </lineage>
</organism>
<proteinExistence type="inferred from homology"/>
<name>CDIA_YERMW</name>